<evidence type="ECO:0000255" key="1">
    <source>
        <dbReference type="HAMAP-Rule" id="MF_01962"/>
    </source>
</evidence>
<keyword id="KW-0378">Hydrolase</keyword>
<keyword id="KW-0479">Metal-binding</keyword>
<keyword id="KW-0546">Nucleotide metabolism</keyword>
<keyword id="KW-1185">Reference proteome</keyword>
<keyword id="KW-0862">Zinc</keyword>
<sequence>MTDASFAPSASAEFVRGLPKAELHMHIEGSLEPELMFELAQRNGITLPFASVEEIRAAYDFSNLQDFLDIYYQGAGVLITEADFKDLALAYFQRLAADGGAHAEIFFDPQTHTDRGIAFDTVMNGLLAGMDEAEKTLGVTSKLILCFLRHLSEEAAFETLEQAKPWLAKLAGVGLDSSEVGHPPAKFARVLQASRDLGLKVVAHAGEEGPPAYVWEAIDLVKVDRIDHGNRALEDEALTARLVKDGITLTVCPLSNLKLCGVPSLDVHPLKRMLDLGLKATVNSDDPAYFGGYLLENYLATADAVGLTRDDIVTLAKNSFAGSFLTDAEKAQRIAAVEAYAAAH</sequence>
<dbReference type="EC" id="3.5.4.2" evidence="1"/>
<dbReference type="EMBL" id="CP001340">
    <property type="protein sequence ID" value="ACL96748.1"/>
    <property type="molecule type" value="Genomic_DNA"/>
</dbReference>
<dbReference type="RefSeq" id="WP_010921016.1">
    <property type="nucleotide sequence ID" value="NC_011916.1"/>
</dbReference>
<dbReference type="RefSeq" id="YP_002518656.1">
    <property type="nucleotide sequence ID" value="NC_011916.1"/>
</dbReference>
<dbReference type="SMR" id="B8H3Z4"/>
<dbReference type="GeneID" id="7330306"/>
<dbReference type="KEGG" id="ccs:CCNA_03284"/>
<dbReference type="PATRIC" id="fig|565050.3.peg.3204"/>
<dbReference type="HOGENOM" id="CLU_039228_7_0_5"/>
<dbReference type="OrthoDB" id="105475at2"/>
<dbReference type="PhylomeDB" id="B8H3Z4"/>
<dbReference type="Proteomes" id="UP000001364">
    <property type="component" value="Chromosome"/>
</dbReference>
<dbReference type="GO" id="GO:0005829">
    <property type="term" value="C:cytosol"/>
    <property type="evidence" value="ECO:0007669"/>
    <property type="project" value="TreeGrafter"/>
</dbReference>
<dbReference type="GO" id="GO:0000034">
    <property type="term" value="F:adenine deaminase activity"/>
    <property type="evidence" value="ECO:0007669"/>
    <property type="project" value="UniProtKB-UniRule"/>
</dbReference>
<dbReference type="GO" id="GO:0008270">
    <property type="term" value="F:zinc ion binding"/>
    <property type="evidence" value="ECO:0007669"/>
    <property type="project" value="UniProtKB-UniRule"/>
</dbReference>
<dbReference type="GO" id="GO:0006146">
    <property type="term" value="P:adenine catabolic process"/>
    <property type="evidence" value="ECO:0007669"/>
    <property type="project" value="UniProtKB-UniRule"/>
</dbReference>
<dbReference type="GO" id="GO:0043103">
    <property type="term" value="P:hypoxanthine salvage"/>
    <property type="evidence" value="ECO:0007669"/>
    <property type="project" value="UniProtKB-UniRule"/>
</dbReference>
<dbReference type="GO" id="GO:0009117">
    <property type="term" value="P:nucleotide metabolic process"/>
    <property type="evidence" value="ECO:0007669"/>
    <property type="project" value="UniProtKB-KW"/>
</dbReference>
<dbReference type="CDD" id="cd01320">
    <property type="entry name" value="ADA"/>
    <property type="match status" value="1"/>
</dbReference>
<dbReference type="FunFam" id="3.20.20.140:FF:000039">
    <property type="entry name" value="Adenine deaminase"/>
    <property type="match status" value="1"/>
</dbReference>
<dbReference type="Gene3D" id="3.20.20.140">
    <property type="entry name" value="Metal-dependent hydrolases"/>
    <property type="match status" value="1"/>
</dbReference>
<dbReference type="HAMAP" id="MF_01962">
    <property type="entry name" value="Adenine_deaminase"/>
    <property type="match status" value="1"/>
</dbReference>
<dbReference type="InterPro" id="IPR001365">
    <property type="entry name" value="A_deaminase_dom"/>
</dbReference>
<dbReference type="InterPro" id="IPR028892">
    <property type="entry name" value="ADE"/>
</dbReference>
<dbReference type="InterPro" id="IPR006330">
    <property type="entry name" value="Ado/ade_deaminase"/>
</dbReference>
<dbReference type="InterPro" id="IPR032466">
    <property type="entry name" value="Metal_Hydrolase"/>
</dbReference>
<dbReference type="NCBIfam" id="TIGR01430">
    <property type="entry name" value="aden_deam"/>
    <property type="match status" value="1"/>
</dbReference>
<dbReference type="NCBIfam" id="NF006850">
    <property type="entry name" value="PRK09358.1-6"/>
    <property type="match status" value="1"/>
</dbReference>
<dbReference type="PANTHER" id="PTHR43114">
    <property type="entry name" value="ADENINE DEAMINASE"/>
    <property type="match status" value="1"/>
</dbReference>
<dbReference type="PANTHER" id="PTHR43114:SF6">
    <property type="entry name" value="ADENINE DEAMINASE"/>
    <property type="match status" value="1"/>
</dbReference>
<dbReference type="Pfam" id="PF00962">
    <property type="entry name" value="A_deaminase"/>
    <property type="match status" value="1"/>
</dbReference>
<dbReference type="SUPFAM" id="SSF51556">
    <property type="entry name" value="Metallo-dependent hydrolases"/>
    <property type="match status" value="1"/>
</dbReference>
<comment type="function">
    <text evidence="1">Catalyzes the hydrolytic deamination of adenine to hypoxanthine. Plays an important role in the purine salvage pathway and in nitrogen catabolism.</text>
</comment>
<comment type="catalytic activity">
    <reaction evidence="1">
        <text>adenine + H2O + H(+) = hypoxanthine + NH4(+)</text>
        <dbReference type="Rhea" id="RHEA:23688"/>
        <dbReference type="ChEBI" id="CHEBI:15377"/>
        <dbReference type="ChEBI" id="CHEBI:15378"/>
        <dbReference type="ChEBI" id="CHEBI:16708"/>
        <dbReference type="ChEBI" id="CHEBI:17368"/>
        <dbReference type="ChEBI" id="CHEBI:28938"/>
        <dbReference type="EC" id="3.5.4.2"/>
    </reaction>
</comment>
<comment type="cofactor">
    <cofactor evidence="1">
        <name>Zn(2+)</name>
        <dbReference type="ChEBI" id="CHEBI:29105"/>
    </cofactor>
    <text evidence="1">Binds 1 zinc ion per subunit.</text>
</comment>
<comment type="similarity">
    <text evidence="1">Belongs to the metallo-dependent hydrolases superfamily. Adenosine and AMP deaminases family. Adenine deaminase type 2 subfamily.</text>
</comment>
<name>ADE_CAUVN</name>
<proteinExistence type="inferred from homology"/>
<organism>
    <name type="scientific">Caulobacter vibrioides (strain NA1000 / CB15N)</name>
    <name type="common">Caulobacter crescentus</name>
    <dbReference type="NCBI Taxonomy" id="565050"/>
    <lineage>
        <taxon>Bacteria</taxon>
        <taxon>Pseudomonadati</taxon>
        <taxon>Pseudomonadota</taxon>
        <taxon>Alphaproteobacteria</taxon>
        <taxon>Caulobacterales</taxon>
        <taxon>Caulobacteraceae</taxon>
        <taxon>Caulobacter</taxon>
    </lineage>
</organism>
<gene>
    <name type="ordered locus">CCNA_03284</name>
</gene>
<accession>B8H3Z4</accession>
<reference key="1">
    <citation type="journal article" date="2010" name="J. Bacteriol.">
        <title>The genetic basis of laboratory adaptation in Caulobacter crescentus.</title>
        <authorList>
            <person name="Marks M.E."/>
            <person name="Castro-Rojas C.M."/>
            <person name="Teiling C."/>
            <person name="Du L."/>
            <person name="Kapatral V."/>
            <person name="Walunas T.L."/>
            <person name="Crosson S."/>
        </authorList>
    </citation>
    <scope>NUCLEOTIDE SEQUENCE [LARGE SCALE GENOMIC DNA]</scope>
    <source>
        <strain>NA1000 / CB15N</strain>
    </source>
</reference>
<protein>
    <recommendedName>
        <fullName evidence="1">Adenine deaminase</fullName>
        <shortName evidence="1">ADE</shortName>
        <ecNumber evidence="1">3.5.4.2</ecNumber>
    </recommendedName>
    <alternativeName>
        <fullName evidence="1">Adenine aminohydrolase</fullName>
        <shortName evidence="1">AAH</shortName>
    </alternativeName>
</protein>
<feature type="chain" id="PRO_1000146565" description="Adenine deaminase">
    <location>
        <begin position="1"/>
        <end position="344"/>
    </location>
</feature>
<feature type="active site" description="Proton donor" evidence="1">
    <location>
        <position position="207"/>
    </location>
</feature>
<feature type="binding site" evidence="1">
    <location>
        <position position="24"/>
    </location>
    <ligand>
        <name>Zn(2+)</name>
        <dbReference type="ChEBI" id="CHEBI:29105"/>
        <note>catalytic</note>
    </ligand>
</feature>
<feature type="binding site" evidence="1">
    <location>
        <position position="26"/>
    </location>
    <ligand>
        <name>Zn(2+)</name>
        <dbReference type="ChEBI" id="CHEBI:29105"/>
        <note>catalytic</note>
    </ligand>
</feature>
<feature type="binding site" evidence="1">
    <location>
        <position position="204"/>
    </location>
    <ligand>
        <name>Zn(2+)</name>
        <dbReference type="ChEBI" id="CHEBI:29105"/>
        <note>catalytic</note>
    </ligand>
</feature>
<feature type="binding site" evidence="1">
    <location>
        <position position="285"/>
    </location>
    <ligand>
        <name>Zn(2+)</name>
        <dbReference type="ChEBI" id="CHEBI:29105"/>
        <note>catalytic</note>
    </ligand>
</feature>
<feature type="binding site" evidence="1">
    <location>
        <position position="286"/>
    </location>
    <ligand>
        <name>substrate</name>
    </ligand>
</feature>
<feature type="site" description="Important for catalytic activity" evidence="1">
    <location>
        <position position="228"/>
    </location>
</feature>